<organism>
    <name type="scientific">Pyrococcus furiosus (strain ATCC 43587 / DSM 3638 / JCM 8422 / Vc1)</name>
    <dbReference type="NCBI Taxonomy" id="186497"/>
    <lineage>
        <taxon>Archaea</taxon>
        <taxon>Methanobacteriati</taxon>
        <taxon>Methanobacteriota</taxon>
        <taxon>Thermococci</taxon>
        <taxon>Thermococcales</taxon>
        <taxon>Thermococcaceae</taxon>
        <taxon>Pyrococcus</taxon>
    </lineage>
</organism>
<reference key="1">
    <citation type="journal article" date="2002" name="FEMS Microbiol. Lett.">
        <title>Overexpression in Escherichia coli of the AT-rich trpA and trpB genes from the hyperthermophilic archaeon Pyrococcus furiosus.</title>
        <authorList>
            <person name="Ishida M."/>
            <person name="Oshima T."/>
            <person name="Yutani K."/>
        </authorList>
    </citation>
    <scope>NUCLEOTIDE SEQUENCE [GENOMIC DNA]</scope>
    <scope>PROTEIN SEQUENCE OF 1-10</scope>
    <source>
        <strain>ATCC 43587 / DSM 3638 / JCM 8422 / Vc1</strain>
    </source>
</reference>
<reference key="2">
    <citation type="journal article" date="1999" name="Genetics">
        <title>Divergence of the hyperthermophilic archaea Pyrococcus furiosus and P. horikoshii inferred from complete genomic sequences.</title>
        <authorList>
            <person name="Maeder D.L."/>
            <person name="Weiss R.B."/>
            <person name="Dunn D.M."/>
            <person name="Cherry J.L."/>
            <person name="Gonzalez J.M."/>
            <person name="DiRuggiero J."/>
            <person name="Robb F.T."/>
        </authorList>
    </citation>
    <scope>NUCLEOTIDE SEQUENCE [LARGE SCALE GENOMIC DNA]</scope>
    <source>
        <strain>ATCC 43587 / DSM 3638 / JCM 8422 / Vc1</strain>
    </source>
</reference>
<comment type="function">
    <text evidence="1">The beta subunit is responsible for the synthesis of L-tryptophan from indole and L-serine.</text>
</comment>
<comment type="catalytic activity">
    <reaction>
        <text>(1S,2R)-1-C-(indol-3-yl)glycerol 3-phosphate + L-serine = D-glyceraldehyde 3-phosphate + L-tryptophan + H2O</text>
        <dbReference type="Rhea" id="RHEA:10532"/>
        <dbReference type="ChEBI" id="CHEBI:15377"/>
        <dbReference type="ChEBI" id="CHEBI:33384"/>
        <dbReference type="ChEBI" id="CHEBI:57912"/>
        <dbReference type="ChEBI" id="CHEBI:58866"/>
        <dbReference type="ChEBI" id="CHEBI:59776"/>
        <dbReference type="EC" id="4.2.1.20"/>
    </reaction>
</comment>
<comment type="cofactor">
    <cofactor evidence="1">
        <name>pyridoxal 5'-phosphate</name>
        <dbReference type="ChEBI" id="CHEBI:597326"/>
    </cofactor>
</comment>
<comment type="pathway">
    <text>Amino-acid biosynthesis; L-tryptophan biosynthesis; L-tryptophan from chorismate: step 5/5.</text>
</comment>
<comment type="subunit">
    <text evidence="1">Tetramer of two alpha and two beta chains.</text>
</comment>
<comment type="similarity">
    <text evidence="2">Belongs to the TrpB family.</text>
</comment>
<gene>
    <name type="primary">trpB1</name>
    <name type="ordered locus">PF1706</name>
</gene>
<accession>Q8U093</accession>
<keyword id="KW-0002">3D-structure</keyword>
<keyword id="KW-0028">Amino-acid biosynthesis</keyword>
<keyword id="KW-0057">Aromatic amino acid biosynthesis</keyword>
<keyword id="KW-0903">Direct protein sequencing</keyword>
<keyword id="KW-0456">Lyase</keyword>
<keyword id="KW-0663">Pyridoxal phosphate</keyword>
<keyword id="KW-1185">Reference proteome</keyword>
<keyword id="KW-0822">Tryptophan biosynthesis</keyword>
<sequence length="388" mass="42529">MWFGEFGGQYVPETLIEPLKELEKAYKRFKDDEEFNRQLNYYLKTWAGRPTPLYYAKRLTEKIGGAKIYLKREDLVHGGAHKTNNAIGQALLAKFMGKTRLIAETGAGQHGVATAMAGALLGMKVDIYMGAEDVERQKMNVFRMKLLGANVIPVNSGSRTLKDAINEALRDWVATFEYTHYLIGSVVGPHPYPTIVRDFQSVIGREAKAQILEAEGQLPDVIVACVGGGSNAMGIFYPFVNDKKVKLVGVEAGGKGLESGKHSASLNAGQVGVFHGMLSYFLQDEEGQIKPTHSIAPGLDYPGVGPEHAYLKKIQRAEYVTVTDEEALKAFHELSRTEGIIPALESAHAVAYAMKLAKEMSRDEIIIVNLSGRGDKDLDIVLKVSGNV</sequence>
<name>TRPB1_PYRFU</name>
<protein>
    <recommendedName>
        <fullName>Tryptophan synthase beta chain 1</fullName>
        <ecNumber>4.2.1.20</ecNumber>
    </recommendedName>
</protein>
<dbReference type="EC" id="4.2.1.20"/>
<dbReference type="EMBL" id="AB080770">
    <property type="protein sequence ID" value="BAC11855.1"/>
    <property type="molecule type" value="Genomic_DNA"/>
</dbReference>
<dbReference type="EMBL" id="AE009950">
    <property type="protein sequence ID" value="AAL81830.1"/>
    <property type="molecule type" value="Genomic_DNA"/>
</dbReference>
<dbReference type="PDB" id="1V8Z">
    <property type="method" value="X-ray"/>
    <property type="resolution" value="2.21 A"/>
    <property type="chains" value="A/B/C/D=1-388"/>
</dbReference>
<dbReference type="PDB" id="1WDW">
    <property type="method" value="X-ray"/>
    <property type="resolution" value="3.00 A"/>
    <property type="chains" value="B/D/F/H/J/L=1-385"/>
</dbReference>
<dbReference type="PDB" id="5DVZ">
    <property type="method" value="X-ray"/>
    <property type="resolution" value="1.69 A"/>
    <property type="chains" value="A/B/C/D=1-388"/>
</dbReference>
<dbReference type="PDB" id="5DW0">
    <property type="method" value="X-ray"/>
    <property type="resolution" value="2.01 A"/>
    <property type="chains" value="A/B/C/D=1-388"/>
</dbReference>
<dbReference type="PDB" id="5DW3">
    <property type="method" value="X-ray"/>
    <property type="resolution" value="1.74 A"/>
    <property type="chains" value="A/B/C/D=1-388"/>
</dbReference>
<dbReference type="PDB" id="5E0K">
    <property type="method" value="X-ray"/>
    <property type="resolution" value="2.76 A"/>
    <property type="chains" value="B/D/F/H/J/L=1-388"/>
</dbReference>
<dbReference type="PDB" id="5IXJ">
    <property type="method" value="X-ray"/>
    <property type="resolution" value="1.54 A"/>
    <property type="chains" value="A/B/C/D=1-388"/>
</dbReference>
<dbReference type="PDB" id="5T6M">
    <property type="method" value="X-ray"/>
    <property type="resolution" value="1.80 A"/>
    <property type="chains" value="A/B/C/D=1-388"/>
</dbReference>
<dbReference type="PDB" id="5VM5">
    <property type="method" value="X-ray"/>
    <property type="resolution" value="1.67 A"/>
    <property type="chains" value="A/B/C/D=1-388"/>
</dbReference>
<dbReference type="PDB" id="6AM7">
    <property type="method" value="X-ray"/>
    <property type="resolution" value="1.47 A"/>
    <property type="chains" value="A/B/C/D=1-388"/>
</dbReference>
<dbReference type="PDB" id="6AM8">
    <property type="method" value="X-ray"/>
    <property type="resolution" value="1.83 A"/>
    <property type="chains" value="A/B/C/D=1-388"/>
</dbReference>
<dbReference type="PDB" id="6AM9">
    <property type="method" value="X-ray"/>
    <property type="resolution" value="2.09 A"/>
    <property type="chains" value="A/B/C/D=1-388"/>
</dbReference>
<dbReference type="PDB" id="6AMC">
    <property type="method" value="X-ray"/>
    <property type="resolution" value="1.93 A"/>
    <property type="chains" value="A/B/C/D=1-388"/>
</dbReference>
<dbReference type="PDB" id="6AMH">
    <property type="method" value="X-ray"/>
    <property type="resolution" value="1.63 A"/>
    <property type="chains" value="A/B/C/D=1-388"/>
</dbReference>
<dbReference type="PDB" id="6AMI">
    <property type="method" value="X-ray"/>
    <property type="resolution" value="1.97 A"/>
    <property type="chains" value="A/B/C/D=1-388"/>
</dbReference>
<dbReference type="PDB" id="6CUT">
    <property type="method" value="X-ray"/>
    <property type="resolution" value="1.77 A"/>
    <property type="chains" value="A/B/C/D=1-388"/>
</dbReference>
<dbReference type="PDB" id="6CUV">
    <property type="method" value="X-ray"/>
    <property type="resolution" value="2.26 A"/>
    <property type="chains" value="A/B/C/D=1-388"/>
</dbReference>
<dbReference type="PDB" id="6CUZ">
    <property type="method" value="X-ray"/>
    <property type="resolution" value="1.75 A"/>
    <property type="chains" value="A/B/C/D=1-388"/>
</dbReference>
<dbReference type="PDB" id="7RNP">
    <property type="method" value="X-ray"/>
    <property type="resolution" value="2.25 A"/>
    <property type="chains" value="A/B/C/D=1-388"/>
</dbReference>
<dbReference type="PDB" id="7RNQ">
    <property type="method" value="X-ray"/>
    <property type="resolution" value="2.10 A"/>
    <property type="chains" value="A/B/C/D=1-388"/>
</dbReference>
<dbReference type="PDB" id="7ROF">
    <property type="method" value="X-ray"/>
    <property type="resolution" value="2.39 A"/>
    <property type="chains" value="A/B/C/D=1-388"/>
</dbReference>
<dbReference type="PDBsum" id="1V8Z"/>
<dbReference type="PDBsum" id="1WDW"/>
<dbReference type="PDBsum" id="5DVZ"/>
<dbReference type="PDBsum" id="5DW0"/>
<dbReference type="PDBsum" id="5DW3"/>
<dbReference type="PDBsum" id="5E0K"/>
<dbReference type="PDBsum" id="5IXJ"/>
<dbReference type="PDBsum" id="5T6M"/>
<dbReference type="PDBsum" id="5VM5"/>
<dbReference type="PDBsum" id="6AM7"/>
<dbReference type="PDBsum" id="6AM8"/>
<dbReference type="PDBsum" id="6AM9"/>
<dbReference type="PDBsum" id="6AMC"/>
<dbReference type="PDBsum" id="6AMH"/>
<dbReference type="PDBsum" id="6AMI"/>
<dbReference type="PDBsum" id="6CUT"/>
<dbReference type="PDBsum" id="6CUV"/>
<dbReference type="PDBsum" id="6CUZ"/>
<dbReference type="PDBsum" id="7RNP"/>
<dbReference type="PDBsum" id="7RNQ"/>
<dbReference type="PDBsum" id="7ROF"/>
<dbReference type="SMR" id="Q8U093"/>
<dbReference type="STRING" id="186497.PF1706"/>
<dbReference type="PaxDb" id="186497-PF1706"/>
<dbReference type="KEGG" id="pfu:PF1706"/>
<dbReference type="PATRIC" id="fig|186497.12.peg.1774"/>
<dbReference type="eggNOG" id="arCOG01433">
    <property type="taxonomic scope" value="Archaea"/>
</dbReference>
<dbReference type="HOGENOM" id="CLU_016734_3_1_2"/>
<dbReference type="OrthoDB" id="371827at2157"/>
<dbReference type="PhylomeDB" id="Q8U093"/>
<dbReference type="BRENDA" id="4.2.1.20">
    <property type="organism ID" value="5243"/>
</dbReference>
<dbReference type="UniPathway" id="UPA00035">
    <property type="reaction ID" value="UER00044"/>
</dbReference>
<dbReference type="EvolutionaryTrace" id="Q8U093"/>
<dbReference type="Proteomes" id="UP000001013">
    <property type="component" value="Chromosome"/>
</dbReference>
<dbReference type="GO" id="GO:0005737">
    <property type="term" value="C:cytoplasm"/>
    <property type="evidence" value="ECO:0007669"/>
    <property type="project" value="TreeGrafter"/>
</dbReference>
<dbReference type="GO" id="GO:0004834">
    <property type="term" value="F:tryptophan synthase activity"/>
    <property type="evidence" value="ECO:0007669"/>
    <property type="project" value="UniProtKB-UniRule"/>
</dbReference>
<dbReference type="CDD" id="cd06446">
    <property type="entry name" value="Trp-synth_B"/>
    <property type="match status" value="1"/>
</dbReference>
<dbReference type="FunFam" id="3.40.50.1100:FF:000001">
    <property type="entry name" value="Tryptophan synthase beta chain"/>
    <property type="match status" value="1"/>
</dbReference>
<dbReference type="FunFam" id="3.40.50.1100:FF:000004">
    <property type="entry name" value="Tryptophan synthase beta chain"/>
    <property type="match status" value="1"/>
</dbReference>
<dbReference type="Gene3D" id="3.40.50.1100">
    <property type="match status" value="2"/>
</dbReference>
<dbReference type="HAMAP" id="MF_00133">
    <property type="entry name" value="Trp_synth_beta"/>
    <property type="match status" value="1"/>
</dbReference>
<dbReference type="InterPro" id="IPR006653">
    <property type="entry name" value="Trp_synth_b_CS"/>
</dbReference>
<dbReference type="InterPro" id="IPR006654">
    <property type="entry name" value="Trp_synth_beta"/>
</dbReference>
<dbReference type="InterPro" id="IPR023026">
    <property type="entry name" value="Trp_synth_beta/beta-like"/>
</dbReference>
<dbReference type="InterPro" id="IPR001926">
    <property type="entry name" value="TrpB-like_PALP"/>
</dbReference>
<dbReference type="InterPro" id="IPR036052">
    <property type="entry name" value="TrpB-like_PALP_sf"/>
</dbReference>
<dbReference type="NCBIfam" id="TIGR00263">
    <property type="entry name" value="trpB"/>
    <property type="match status" value="1"/>
</dbReference>
<dbReference type="PANTHER" id="PTHR48077:SF3">
    <property type="entry name" value="TRYPTOPHAN SYNTHASE"/>
    <property type="match status" value="1"/>
</dbReference>
<dbReference type="PANTHER" id="PTHR48077">
    <property type="entry name" value="TRYPTOPHAN SYNTHASE-RELATED"/>
    <property type="match status" value="1"/>
</dbReference>
<dbReference type="Pfam" id="PF00291">
    <property type="entry name" value="PALP"/>
    <property type="match status" value="1"/>
</dbReference>
<dbReference type="PIRSF" id="PIRSF001413">
    <property type="entry name" value="Trp_syn_beta"/>
    <property type="match status" value="1"/>
</dbReference>
<dbReference type="SUPFAM" id="SSF53686">
    <property type="entry name" value="Tryptophan synthase beta subunit-like PLP-dependent enzymes"/>
    <property type="match status" value="1"/>
</dbReference>
<dbReference type="PROSITE" id="PS00168">
    <property type="entry name" value="TRP_SYNTHASE_BETA"/>
    <property type="match status" value="1"/>
</dbReference>
<feature type="chain" id="PRO_0000099050" description="Tryptophan synthase beta chain 1">
    <location>
        <begin position="1"/>
        <end position="388"/>
    </location>
</feature>
<feature type="modified residue" description="N6-(pyridoxal phosphate)lysine" evidence="1">
    <location>
        <position position="82"/>
    </location>
</feature>
<feature type="strand" evidence="5">
    <location>
        <begin position="6"/>
        <end position="11"/>
    </location>
</feature>
<feature type="helix" evidence="4">
    <location>
        <begin position="13"/>
        <end position="29"/>
    </location>
</feature>
<feature type="helix" evidence="4">
    <location>
        <begin position="33"/>
        <end position="45"/>
    </location>
</feature>
<feature type="strand" evidence="4">
    <location>
        <begin position="53"/>
        <end position="55"/>
    </location>
</feature>
<feature type="helix" evidence="4">
    <location>
        <begin position="57"/>
        <end position="63"/>
    </location>
</feature>
<feature type="strand" evidence="4">
    <location>
        <begin position="65"/>
        <end position="71"/>
    </location>
</feature>
<feature type="helix" evidence="4">
    <location>
        <begin position="73"/>
        <end position="75"/>
    </location>
</feature>
<feature type="helix" evidence="4">
    <location>
        <begin position="84"/>
        <end position="95"/>
    </location>
</feature>
<feature type="strand" evidence="4">
    <location>
        <begin position="100"/>
        <end position="108"/>
    </location>
</feature>
<feature type="helix" evidence="4">
    <location>
        <begin position="109"/>
        <end position="120"/>
    </location>
</feature>
<feature type="strand" evidence="4">
    <location>
        <begin position="124"/>
        <end position="130"/>
    </location>
</feature>
<feature type="helix" evidence="4">
    <location>
        <begin position="131"/>
        <end position="136"/>
    </location>
</feature>
<feature type="helix" evidence="4">
    <location>
        <begin position="138"/>
        <end position="146"/>
    </location>
</feature>
<feature type="strand" evidence="4">
    <location>
        <begin position="150"/>
        <end position="154"/>
    </location>
</feature>
<feature type="helix" evidence="4">
    <location>
        <begin position="161"/>
        <end position="175"/>
    </location>
</feature>
<feature type="turn" evidence="4">
    <location>
        <begin position="176"/>
        <end position="178"/>
    </location>
</feature>
<feature type="strand" evidence="4">
    <location>
        <begin position="179"/>
        <end position="181"/>
    </location>
</feature>
<feature type="strand" evidence="3">
    <location>
        <begin position="184"/>
        <end position="186"/>
    </location>
</feature>
<feature type="helix" evidence="4">
    <location>
        <begin position="192"/>
        <end position="200"/>
    </location>
</feature>
<feature type="helix" evidence="4">
    <location>
        <begin position="202"/>
        <end position="215"/>
    </location>
</feature>
<feature type="strand" evidence="4">
    <location>
        <begin position="220"/>
        <end position="225"/>
    </location>
</feature>
<feature type="strand" evidence="4">
    <location>
        <begin position="227"/>
        <end position="229"/>
    </location>
</feature>
<feature type="helix" evidence="4">
    <location>
        <begin position="230"/>
        <end position="236"/>
    </location>
</feature>
<feature type="helix" evidence="4">
    <location>
        <begin position="237"/>
        <end position="239"/>
    </location>
</feature>
<feature type="strand" evidence="4">
    <location>
        <begin position="245"/>
        <end position="254"/>
    </location>
</feature>
<feature type="turn" evidence="4">
    <location>
        <begin position="257"/>
        <end position="260"/>
    </location>
</feature>
<feature type="helix" evidence="4">
    <location>
        <begin position="265"/>
        <end position="268"/>
    </location>
</feature>
<feature type="strand" evidence="4">
    <location>
        <begin position="270"/>
        <end position="274"/>
    </location>
</feature>
<feature type="strand" evidence="4">
    <location>
        <begin position="277"/>
        <end position="281"/>
    </location>
</feature>
<feature type="strand" evidence="6">
    <location>
        <begin position="285"/>
        <end position="289"/>
    </location>
</feature>
<feature type="helix" evidence="4">
    <location>
        <begin position="297"/>
        <end position="299"/>
    </location>
</feature>
<feature type="helix" evidence="4">
    <location>
        <begin position="306"/>
        <end position="313"/>
    </location>
</feature>
<feature type="strand" evidence="4">
    <location>
        <begin position="316"/>
        <end position="323"/>
    </location>
</feature>
<feature type="helix" evidence="4">
    <location>
        <begin position="324"/>
        <end position="338"/>
    </location>
</feature>
<feature type="helix" evidence="4">
    <location>
        <begin position="344"/>
        <end position="358"/>
    </location>
</feature>
<feature type="strand" evidence="4">
    <location>
        <begin position="365"/>
        <end position="369"/>
    </location>
</feature>
<feature type="strand" evidence="4">
    <location>
        <begin position="372"/>
        <end position="374"/>
    </location>
</feature>
<feature type="helix" evidence="4">
    <location>
        <begin position="375"/>
        <end position="377"/>
    </location>
</feature>
<feature type="helix" evidence="4">
    <location>
        <begin position="378"/>
        <end position="383"/>
    </location>
</feature>
<evidence type="ECO:0000250" key="1"/>
<evidence type="ECO:0000305" key="2"/>
<evidence type="ECO:0007829" key="3">
    <source>
        <dbReference type="PDB" id="5DW3"/>
    </source>
</evidence>
<evidence type="ECO:0007829" key="4">
    <source>
        <dbReference type="PDB" id="6AM7"/>
    </source>
</evidence>
<evidence type="ECO:0007829" key="5">
    <source>
        <dbReference type="PDB" id="6AMH"/>
    </source>
</evidence>
<evidence type="ECO:0007829" key="6">
    <source>
        <dbReference type="PDB" id="6CUZ"/>
    </source>
</evidence>
<proteinExistence type="evidence at protein level"/>